<name>ZO8I_XENLA</name>
<sequence length="145" mass="16802">HKREADFCSKGNLTNPEISPVEHYPPTNEIKEEATSWEEGNQSDYSINSLTEQIQGPYTPTPIMEYNHLIMQDNKYDVNACNSPLQETDVTKHALHKRDIDRRQRTQTQLKYDHRTNTGDKPLSCSECGKCFSTYHVLARHQKTH</sequence>
<evidence type="ECO:0000255" key="1">
    <source>
        <dbReference type="PROSITE-ProRule" id="PRU00042"/>
    </source>
</evidence>
<evidence type="ECO:0000256" key="2">
    <source>
        <dbReference type="SAM" id="MobiDB-lite"/>
    </source>
</evidence>
<evidence type="ECO:0000305" key="3"/>
<organism>
    <name type="scientific">Xenopus laevis</name>
    <name type="common">African clawed frog</name>
    <dbReference type="NCBI Taxonomy" id="8355"/>
    <lineage>
        <taxon>Eukaryota</taxon>
        <taxon>Metazoa</taxon>
        <taxon>Chordata</taxon>
        <taxon>Craniata</taxon>
        <taxon>Vertebrata</taxon>
        <taxon>Euteleostomi</taxon>
        <taxon>Amphibia</taxon>
        <taxon>Batrachia</taxon>
        <taxon>Anura</taxon>
        <taxon>Pipoidea</taxon>
        <taxon>Pipidae</taxon>
        <taxon>Xenopodinae</taxon>
        <taxon>Xenopus</taxon>
        <taxon>Xenopus</taxon>
    </lineage>
</organism>
<protein>
    <recommendedName>
        <fullName>Oocyte zinc finger protein XlCOF8.4I</fullName>
    </recommendedName>
</protein>
<proteinExistence type="evidence at transcript level"/>
<feature type="chain" id="PRO_0000047814" description="Oocyte zinc finger protein XlCOF8.4I">
    <location>
        <begin position="1" status="less than"/>
        <end position="145" status="greater than"/>
    </location>
</feature>
<feature type="zinc finger region" description="C2H2-type" evidence="1">
    <location>
        <begin position="123"/>
        <end position="145"/>
    </location>
</feature>
<feature type="region of interest" description="Disordered" evidence="2">
    <location>
        <begin position="1"/>
        <end position="25"/>
    </location>
</feature>
<feature type="non-terminal residue">
    <location>
        <position position="1"/>
    </location>
</feature>
<feature type="non-terminal residue">
    <location>
        <position position="145"/>
    </location>
</feature>
<reference key="1">
    <citation type="journal article" date="1989" name="Proc. Natl. Acad. Sci. U.S.A.">
        <title>Evolutionary conserved modules associated with zinc fingers in Xenopus laevis.</title>
        <authorList>
            <person name="Knoechel W."/>
            <person name="Poeting A."/>
            <person name="Koester M."/>
            <person name="el Baradi T."/>
            <person name="Nietfeld W."/>
            <person name="Bouwmeester T."/>
            <person name="Pieler T."/>
        </authorList>
    </citation>
    <scope>NUCLEOTIDE SEQUENCE [MRNA]</scope>
</reference>
<accession>P18853</accession>
<dbReference type="EMBL" id="M25869">
    <property type="protein sequence ID" value="AAA50016.1"/>
    <property type="molecule type" value="mRNA"/>
</dbReference>
<dbReference type="PIR" id="D33282">
    <property type="entry name" value="D33282"/>
</dbReference>
<dbReference type="SMR" id="P18853"/>
<dbReference type="Proteomes" id="UP000186698">
    <property type="component" value="Unplaced"/>
</dbReference>
<dbReference type="GO" id="GO:0005634">
    <property type="term" value="C:nucleus"/>
    <property type="evidence" value="ECO:0007669"/>
    <property type="project" value="UniProtKB-SubCell"/>
</dbReference>
<dbReference type="GO" id="GO:0003677">
    <property type="term" value="F:DNA binding"/>
    <property type="evidence" value="ECO:0007669"/>
    <property type="project" value="UniProtKB-KW"/>
</dbReference>
<dbReference type="GO" id="GO:0008270">
    <property type="term" value="F:zinc ion binding"/>
    <property type="evidence" value="ECO:0007669"/>
    <property type="project" value="UniProtKB-KW"/>
</dbReference>
<dbReference type="FunFam" id="3.30.160.60:FF:002343">
    <property type="entry name" value="Zinc finger protein 33A"/>
    <property type="match status" value="1"/>
</dbReference>
<dbReference type="Gene3D" id="3.30.160.60">
    <property type="entry name" value="Classic Zinc Finger"/>
    <property type="match status" value="1"/>
</dbReference>
<dbReference type="InterPro" id="IPR036236">
    <property type="entry name" value="Znf_C2H2_sf"/>
</dbReference>
<dbReference type="InterPro" id="IPR013087">
    <property type="entry name" value="Znf_C2H2_type"/>
</dbReference>
<dbReference type="SUPFAM" id="SSF57667">
    <property type="entry name" value="beta-beta-alpha zinc fingers"/>
    <property type="match status" value="1"/>
</dbReference>
<dbReference type="PROSITE" id="PS00028">
    <property type="entry name" value="ZINC_FINGER_C2H2_1"/>
    <property type="match status" value="1"/>
</dbReference>
<dbReference type="PROSITE" id="PS50157">
    <property type="entry name" value="ZINC_FINGER_C2H2_2"/>
    <property type="match status" value="1"/>
</dbReference>
<comment type="function">
    <text>May be involved in transcriptional regulation.</text>
</comment>
<comment type="subcellular location">
    <subcellularLocation>
        <location evidence="3">Nucleus</location>
    </subcellularLocation>
</comment>
<comment type="similarity">
    <text evidence="3">Belongs to the krueppel C2H2-type zinc-finger protein family.</text>
</comment>
<keyword id="KW-0238">DNA-binding</keyword>
<keyword id="KW-0479">Metal-binding</keyword>
<keyword id="KW-0539">Nucleus</keyword>
<keyword id="KW-1185">Reference proteome</keyword>
<keyword id="KW-0804">Transcription</keyword>
<keyword id="KW-0805">Transcription regulation</keyword>
<keyword id="KW-0862">Zinc</keyword>
<keyword id="KW-0863">Zinc-finger</keyword>